<accession>Q1RGI2</accession>
<name>NHAA_ECOUT</name>
<organism>
    <name type="scientific">Escherichia coli (strain UTI89 / UPEC)</name>
    <dbReference type="NCBI Taxonomy" id="364106"/>
    <lineage>
        <taxon>Bacteria</taxon>
        <taxon>Pseudomonadati</taxon>
        <taxon>Pseudomonadota</taxon>
        <taxon>Gammaproteobacteria</taxon>
        <taxon>Enterobacterales</taxon>
        <taxon>Enterobacteriaceae</taxon>
        <taxon>Escherichia</taxon>
    </lineage>
</organism>
<keyword id="KW-0050">Antiport</keyword>
<keyword id="KW-0997">Cell inner membrane</keyword>
<keyword id="KW-1003">Cell membrane</keyword>
<keyword id="KW-0406">Ion transport</keyword>
<keyword id="KW-0472">Membrane</keyword>
<keyword id="KW-0915">Sodium</keyword>
<keyword id="KW-0739">Sodium transport</keyword>
<keyword id="KW-0812">Transmembrane</keyword>
<keyword id="KW-1133">Transmembrane helix</keyword>
<keyword id="KW-0813">Transport</keyword>
<evidence type="ECO:0000255" key="1">
    <source>
        <dbReference type="HAMAP-Rule" id="MF_01844"/>
    </source>
</evidence>
<reference key="1">
    <citation type="journal article" date="2006" name="Proc. Natl. Acad. Sci. U.S.A.">
        <title>Identification of genes subject to positive selection in uropathogenic strains of Escherichia coli: a comparative genomics approach.</title>
        <authorList>
            <person name="Chen S.L."/>
            <person name="Hung C.-S."/>
            <person name="Xu J."/>
            <person name="Reigstad C.S."/>
            <person name="Magrini V."/>
            <person name="Sabo A."/>
            <person name="Blasiar D."/>
            <person name="Bieri T."/>
            <person name="Meyer R.R."/>
            <person name="Ozersky P."/>
            <person name="Armstrong J.R."/>
            <person name="Fulton R.S."/>
            <person name="Latreille J.P."/>
            <person name="Spieth J."/>
            <person name="Hooton T.M."/>
            <person name="Mardis E.R."/>
            <person name="Hultgren S.J."/>
            <person name="Gordon J.I."/>
        </authorList>
    </citation>
    <scope>NUCLEOTIDE SEQUENCE [LARGE SCALE GENOMIC DNA]</scope>
    <source>
        <strain>UTI89 / UPEC</strain>
    </source>
</reference>
<feature type="chain" id="PRO_0000334284" description="Na(+)/H(+) antiporter NhaA">
    <location>
        <begin position="1"/>
        <end position="388"/>
    </location>
</feature>
<feature type="topological domain" description="Cytoplasmic" evidence="1">
    <location>
        <begin position="1"/>
        <end position="11"/>
    </location>
</feature>
<feature type="transmembrane region" description="Helical; Name=1" evidence="1">
    <location>
        <begin position="12"/>
        <end position="31"/>
    </location>
</feature>
<feature type="topological domain" description="Periplasmic" evidence="1">
    <location>
        <begin position="32"/>
        <end position="58"/>
    </location>
</feature>
<feature type="transmembrane region" description="Helical; Name=2" evidence="1">
    <location>
        <begin position="59"/>
        <end position="80"/>
    </location>
</feature>
<feature type="topological domain" description="Cytoplasmic" evidence="1">
    <location>
        <begin position="81"/>
        <end position="96"/>
    </location>
</feature>
<feature type="transmembrane region" description="Helical; Name=3" evidence="1">
    <location>
        <begin position="97"/>
        <end position="116"/>
    </location>
</feature>
<feature type="topological domain" description="Periplasmic" evidence="1">
    <location>
        <begin position="117"/>
        <end position="122"/>
    </location>
</feature>
<feature type="transmembrane region" description="Helical; Name=4" evidence="1">
    <location>
        <begin position="123"/>
        <end position="130"/>
    </location>
</feature>
<feature type="topological domain" description="Cytoplasmic" evidence="1">
    <location>
        <begin position="131"/>
        <end position="154"/>
    </location>
</feature>
<feature type="transmembrane region" description="Helical; Name=5" evidence="1">
    <location>
        <begin position="155"/>
        <end position="176"/>
    </location>
</feature>
<feature type="topological domain" description="Periplasmic" evidence="1">
    <location>
        <begin position="177"/>
        <end position="180"/>
    </location>
</feature>
<feature type="transmembrane region" description="Helical; Name=6" evidence="1">
    <location>
        <begin position="181"/>
        <end position="200"/>
    </location>
</feature>
<feature type="topological domain" description="Cytoplasmic" evidence="1">
    <location>
        <begin position="201"/>
        <end position="204"/>
    </location>
</feature>
<feature type="transmembrane region" description="Helical; Name=7" evidence="1">
    <location>
        <begin position="205"/>
        <end position="222"/>
    </location>
</feature>
<feature type="topological domain" description="Periplasmic" evidence="1">
    <location>
        <position position="223"/>
    </location>
</feature>
<feature type="transmembrane region" description="Helical; Name=8" evidence="1">
    <location>
        <begin position="224"/>
        <end position="236"/>
    </location>
</feature>
<feature type="topological domain" description="Cytoplasmic" evidence="1">
    <location>
        <begin position="237"/>
        <end position="253"/>
    </location>
</feature>
<feature type="transmembrane region" description="Helical; Name=9" evidence="1">
    <location>
        <begin position="254"/>
        <end position="272"/>
    </location>
</feature>
<feature type="topological domain" description="Periplasmic" evidence="1">
    <location>
        <begin position="273"/>
        <end position="286"/>
    </location>
</feature>
<feature type="transmembrane region" description="Helical; Name=10" evidence="1">
    <location>
        <begin position="287"/>
        <end position="310"/>
    </location>
</feature>
<feature type="topological domain" description="Cytoplasmic" evidence="1">
    <location>
        <begin position="311"/>
        <end position="339"/>
    </location>
</feature>
<feature type="transmembrane region" description="Helical; Name=11" evidence="1">
    <location>
        <begin position="340"/>
        <end position="350"/>
    </location>
</feature>
<feature type="topological domain" description="Periplasmic" evidence="1">
    <location>
        <begin position="351"/>
        <end position="357"/>
    </location>
</feature>
<feature type="transmembrane region" description="Helical; Name=12" evidence="1">
    <location>
        <begin position="358"/>
        <end position="380"/>
    </location>
</feature>
<feature type="topological domain" description="Cytoplasmic" evidence="1">
    <location>
        <begin position="381"/>
        <end position="388"/>
    </location>
</feature>
<dbReference type="EMBL" id="CP000243">
    <property type="protein sequence ID" value="ABE05532.1"/>
    <property type="molecule type" value="Genomic_DNA"/>
</dbReference>
<dbReference type="RefSeq" id="WP_000681386.1">
    <property type="nucleotide sequence ID" value="NZ_CP064825.1"/>
</dbReference>
<dbReference type="SMR" id="Q1RGI2"/>
<dbReference type="KEGG" id="eci:UTI89_C0022"/>
<dbReference type="HOGENOM" id="CLU_015803_1_0_6"/>
<dbReference type="Proteomes" id="UP000001952">
    <property type="component" value="Chromosome"/>
</dbReference>
<dbReference type="GO" id="GO:0005886">
    <property type="term" value="C:plasma membrane"/>
    <property type="evidence" value="ECO:0007669"/>
    <property type="project" value="UniProtKB-SubCell"/>
</dbReference>
<dbReference type="GO" id="GO:0015385">
    <property type="term" value="F:sodium:proton antiporter activity"/>
    <property type="evidence" value="ECO:0007669"/>
    <property type="project" value="TreeGrafter"/>
</dbReference>
<dbReference type="GO" id="GO:0006885">
    <property type="term" value="P:regulation of pH"/>
    <property type="evidence" value="ECO:0007669"/>
    <property type="project" value="InterPro"/>
</dbReference>
<dbReference type="FunFam" id="1.20.1530.10:FF:000001">
    <property type="entry name" value="Na(+)/H(+) antiporter NhaA"/>
    <property type="match status" value="1"/>
</dbReference>
<dbReference type="Gene3D" id="1.20.1530.10">
    <property type="entry name" value="Na+/H+ antiporter like domain"/>
    <property type="match status" value="1"/>
</dbReference>
<dbReference type="HAMAP" id="MF_01844">
    <property type="entry name" value="NhaA"/>
    <property type="match status" value="1"/>
</dbReference>
<dbReference type="InterPro" id="IPR023171">
    <property type="entry name" value="Na/H_antiporter_dom_sf"/>
</dbReference>
<dbReference type="InterPro" id="IPR004670">
    <property type="entry name" value="NhaA"/>
</dbReference>
<dbReference type="NCBIfam" id="TIGR00773">
    <property type="entry name" value="NhaA"/>
    <property type="match status" value="1"/>
</dbReference>
<dbReference type="NCBIfam" id="NF007111">
    <property type="entry name" value="PRK09560.1"/>
    <property type="match status" value="1"/>
</dbReference>
<dbReference type="NCBIfam" id="NF007112">
    <property type="entry name" value="PRK09561.1"/>
    <property type="match status" value="1"/>
</dbReference>
<dbReference type="PANTHER" id="PTHR30341:SF0">
    <property type="entry name" value="NA(+)_H(+) ANTIPORTER NHAA"/>
    <property type="match status" value="1"/>
</dbReference>
<dbReference type="PANTHER" id="PTHR30341">
    <property type="entry name" value="SODIUM ION/PROTON ANTIPORTER NHAA-RELATED"/>
    <property type="match status" value="1"/>
</dbReference>
<dbReference type="Pfam" id="PF06965">
    <property type="entry name" value="Na_H_antiport_1"/>
    <property type="match status" value="1"/>
</dbReference>
<sequence>MKHLHRFFSSDASGGIILIIAAVLAMIMANSGATSGWYHDFLETPVQLRVGTLEINKNMLLWINDALMAVFFLLVGLEVKRELMQGSLASLRQAAFPVIAAIGGMIVPALLYLAFNYADPITREGWAIPAATDIAFALGVLALLGSRVPLALKIFLMALAIIDDLGAIIIIALFYTNDLSMASLGVAAVAIAVLVVLNLCGVRRTGVYILVGVVLWTAVLKSGVHATLAGVIVGFFIPLKEKHGRSPAKRLEHVLHPWVAYLILPLFAFANAGVSLQGVTLEGLTSILPLGIIAGLLIGKPLGISLFCWLALRLKLAHLPEGTTYQQIMAVGILCGIGFTMSIFIASLAFGSVDPELINWAKLGILVGSISSAVIGYSWLRVRLRPSV</sequence>
<protein>
    <recommendedName>
        <fullName evidence="1">Na(+)/H(+) antiporter NhaA</fullName>
    </recommendedName>
    <alternativeName>
        <fullName evidence="1">Sodium/proton antiporter NhaA</fullName>
    </alternativeName>
</protein>
<comment type="function">
    <text evidence="1">Na(+)/H(+) antiporter that extrudes sodium in exchange for external protons.</text>
</comment>
<comment type="catalytic activity">
    <reaction evidence="1">
        <text>Na(+)(in) + 2 H(+)(out) = Na(+)(out) + 2 H(+)(in)</text>
        <dbReference type="Rhea" id="RHEA:29251"/>
        <dbReference type="ChEBI" id="CHEBI:15378"/>
        <dbReference type="ChEBI" id="CHEBI:29101"/>
    </reaction>
    <physiologicalReaction direction="left-to-right" evidence="1">
        <dbReference type="Rhea" id="RHEA:29252"/>
    </physiologicalReaction>
</comment>
<comment type="subcellular location">
    <subcellularLocation>
        <location evidence="1">Cell inner membrane</location>
        <topology evidence="1">Multi-pass membrane protein</topology>
    </subcellularLocation>
</comment>
<comment type="similarity">
    <text evidence="1">Belongs to the NhaA Na(+)/H(+) (TC 2.A.33) antiporter family.</text>
</comment>
<gene>
    <name evidence="1" type="primary">nhaA</name>
    <name type="ordered locus">UTI89_C0022</name>
</gene>
<proteinExistence type="inferred from homology"/>